<feature type="chain" id="PRO_0000460157" description="DSC E3 ubiquitin ligase complex subunit D">
    <location>
        <begin position="1"/>
        <end position="331"/>
    </location>
</feature>
<feature type="transmembrane region" description="Helical" evidence="1">
    <location>
        <begin position="63"/>
        <end position="83"/>
    </location>
</feature>
<feature type="transmembrane region" description="Helical" evidence="1">
    <location>
        <begin position="107"/>
        <end position="127"/>
    </location>
</feature>
<feature type="transmembrane region" description="Helical" evidence="1">
    <location>
        <begin position="159"/>
        <end position="179"/>
    </location>
</feature>
<feature type="region of interest" description="Disordered" evidence="3">
    <location>
        <begin position="197"/>
        <end position="225"/>
    </location>
</feature>
<feature type="compositionally biased region" description="Basic and acidic residues" evidence="3">
    <location>
        <begin position="197"/>
        <end position="214"/>
    </location>
</feature>
<feature type="glycosylation site" description="N-linked (GlcNAc...) asparagine" evidence="2">
    <location>
        <position position="26"/>
    </location>
</feature>
<sequence length="331" mass="36772">MTTPDAFRDAEYIADVSGISYGNVANLTEQDANVVPRENERMRKLQLAAKVAFIDRLLRDLDILIYCELSALYYMDCSVILFAIRAIVQLIFFTPKAPPFDPTRNQPFIGAIFVSNIFCMIFHNFFTHPEASEATRGYLHGGLLIDFIGQKAPIPLFRLFLLDFLVLILDLVMLGLIVERVKTTGQTSTTSTEILRVQDHDSEERGVHRTRPESRSSVVGAELDETDGHITRANAGVGEQAEHTQLLADPSEDGHTPGAKNSHPLDAFSSGEAVIMNLGLFDVIRDQWKYSTTAPPARTSSYIPSDQTAAFLRARFGLQVGPDGRVQRIQS</sequence>
<organism>
    <name type="scientific">Aspergillus fumigatus (strain CBS 144.89 / FGSC A1163 / CEA10)</name>
    <name type="common">Neosartorya fumigata</name>
    <dbReference type="NCBI Taxonomy" id="451804"/>
    <lineage>
        <taxon>Eukaryota</taxon>
        <taxon>Fungi</taxon>
        <taxon>Dikarya</taxon>
        <taxon>Ascomycota</taxon>
        <taxon>Pezizomycotina</taxon>
        <taxon>Eurotiomycetes</taxon>
        <taxon>Eurotiomycetidae</taxon>
        <taxon>Eurotiales</taxon>
        <taxon>Aspergillaceae</taxon>
        <taxon>Aspergillus</taxon>
        <taxon>Aspergillus subgen. Fumigati</taxon>
    </lineage>
</organism>
<reference key="1">
    <citation type="journal article" date="2008" name="PLoS Genet.">
        <title>Genomic islands in the pathogenic filamentous fungus Aspergillus fumigatus.</title>
        <authorList>
            <person name="Fedorova N.D."/>
            <person name="Khaldi N."/>
            <person name="Joardar V.S."/>
            <person name="Maiti R."/>
            <person name="Amedeo P."/>
            <person name="Anderson M.J."/>
            <person name="Crabtree J."/>
            <person name="Silva J.C."/>
            <person name="Badger J.H."/>
            <person name="Albarraq A."/>
            <person name="Angiuoli S."/>
            <person name="Bussey H."/>
            <person name="Bowyer P."/>
            <person name="Cotty P.J."/>
            <person name="Dyer P.S."/>
            <person name="Egan A."/>
            <person name="Galens K."/>
            <person name="Fraser-Liggett C.M."/>
            <person name="Haas B.J."/>
            <person name="Inman J.M."/>
            <person name="Kent R."/>
            <person name="Lemieux S."/>
            <person name="Malavazi I."/>
            <person name="Orvis J."/>
            <person name="Roemer T."/>
            <person name="Ronning C.M."/>
            <person name="Sundaram J.P."/>
            <person name="Sutton G."/>
            <person name="Turner G."/>
            <person name="Venter J.C."/>
            <person name="White O.R."/>
            <person name="Whitty B.R."/>
            <person name="Youngman P."/>
            <person name="Wolfe K.H."/>
            <person name="Goldman G.H."/>
            <person name="Wortman J.R."/>
            <person name="Jiang B."/>
            <person name="Denning D.W."/>
            <person name="Nierman W.C."/>
        </authorList>
    </citation>
    <scope>NUCLEOTIDE SEQUENCE [LARGE SCALE GENOMIC DNA]</scope>
    <source>
        <strain>CBS 144.89 / FGSC A1163 / CEA10</strain>
    </source>
</reference>
<reference key="2">
    <citation type="journal article" date="2012" name="Eukaryot. Cell">
        <title>Dsc orthologs are required for hypoxia adaptation, triazole drug responses, and fungal virulence in Aspergillus fumigatus.</title>
        <authorList>
            <person name="Willger S.D."/>
            <person name="Cornish E.J."/>
            <person name="Chung D."/>
            <person name="Fleming B.A."/>
            <person name="Lehmann M.M."/>
            <person name="Puttikamonkul S."/>
            <person name="Cramer R.A."/>
        </authorList>
    </citation>
    <scope>FUNCTION</scope>
    <scope>DISRUPTION PHENOTYPE</scope>
</reference>
<evidence type="ECO:0000255" key="1"/>
<evidence type="ECO:0000255" key="2">
    <source>
        <dbReference type="PROSITE-ProRule" id="PRU00498"/>
    </source>
</evidence>
<evidence type="ECO:0000256" key="3">
    <source>
        <dbReference type="SAM" id="MobiDB-lite"/>
    </source>
</evidence>
<evidence type="ECO:0000269" key="4">
    <source>
    </source>
</evidence>
<evidence type="ECO:0000303" key="5">
    <source>
    </source>
</evidence>
<evidence type="ECO:0000305" key="6">
    <source>
    </source>
</evidence>
<accession>B0XYF7</accession>
<name>DSCD_ASPFC</name>
<gene>
    <name evidence="5" type="primary">dscD</name>
    <name type="ORF">AFUB_040760</name>
</gene>
<protein>
    <recommendedName>
        <fullName evidence="5">DSC E3 ubiquitin ligase complex subunit D</fullName>
    </recommendedName>
    <alternativeName>
        <fullName evidence="5">Defective for SREBP cleavage protein D</fullName>
    </alternativeName>
</protein>
<proteinExistence type="inferred from homology"/>
<comment type="function">
    <text evidence="4">Component of the DSC E3 ubiquitin ligase complex which is required for the srbA transcriptional activator proteolytic cleavage to release the soluble transcription factor from the membrane in low oxygen or sterol conditions (PubMed:23104569). Required for growth during hypoxia and triazole drug susceptibility, as well as for virulence in a murine model of invasive pulmonary aspergillosis (IPA) (PubMed:23104569).</text>
</comment>
<comment type="pathway">
    <text evidence="6">Protein modification; protein ubiquitination.</text>
</comment>
<comment type="subunit">
    <text evidence="6">Component of the DSC E3 ubiquitin ligase complex composed of dscA, dscB, dscC and dscD.</text>
</comment>
<comment type="subcellular location">
    <subcellularLocation>
        <location evidence="6">Endoplasmic reticulum membrane</location>
        <topology evidence="1">Multi-pass membrane protein</topology>
    </subcellularLocation>
</comment>
<comment type="disruption phenotype">
    <text evidence="4">Impairs growth on solid media under hypoxia and leads to triazole susceptibility (PubMed:23104569). Impairs virulence in a murine model of invasive pulmonary aspergillosis (IPA) (PubMed:23104569).</text>
</comment>
<keyword id="KW-0256">Endoplasmic reticulum</keyword>
<keyword id="KW-0325">Glycoprotein</keyword>
<keyword id="KW-0472">Membrane</keyword>
<keyword id="KW-0812">Transmembrane</keyword>
<keyword id="KW-1133">Transmembrane helix</keyword>
<keyword id="KW-0833">Ubl conjugation pathway</keyword>
<dbReference type="EMBL" id="DS499596">
    <property type="protein sequence ID" value="EDP52903.1"/>
    <property type="molecule type" value="Genomic_DNA"/>
</dbReference>
<dbReference type="EnsemblFungi" id="EDP52903">
    <property type="protein sequence ID" value="EDP52903"/>
    <property type="gene ID" value="AFUB_040760"/>
</dbReference>
<dbReference type="VEuPathDB" id="FungiDB:AFUB_040760"/>
<dbReference type="HOGENOM" id="CLU_052067_0_0_1"/>
<dbReference type="OrthoDB" id="112831at5052"/>
<dbReference type="PhylomeDB" id="B0XYF7"/>
<dbReference type="UniPathway" id="UPA00143"/>
<dbReference type="Proteomes" id="UP000001699">
    <property type="component" value="Unassembled WGS sequence"/>
</dbReference>
<dbReference type="GO" id="GO:0044695">
    <property type="term" value="C:Dsc E3 ubiquitin ligase complex"/>
    <property type="evidence" value="ECO:0007669"/>
    <property type="project" value="InterPro"/>
</dbReference>
<dbReference type="GO" id="GO:0005789">
    <property type="term" value="C:endoplasmic reticulum membrane"/>
    <property type="evidence" value="ECO:0007669"/>
    <property type="project" value="UniProtKB-SubCell"/>
</dbReference>
<dbReference type="GO" id="GO:0032933">
    <property type="term" value="P:SREBP signaling pathway"/>
    <property type="evidence" value="ECO:0007669"/>
    <property type="project" value="InterPro"/>
</dbReference>
<dbReference type="InterPro" id="IPR038967">
    <property type="entry name" value="Dsc4-like"/>
</dbReference>
<dbReference type="InterPro" id="IPR013715">
    <property type="entry name" value="DUF1746"/>
</dbReference>
<dbReference type="PANTHER" id="PTHR39405">
    <property type="entry name" value="DSC E3 UBIQUITIN LIGASE COMPLEX SUBUNIT 4"/>
    <property type="match status" value="1"/>
</dbReference>
<dbReference type="PANTHER" id="PTHR39405:SF1">
    <property type="entry name" value="DSC E3 UBIQUITIN LIGASE COMPLEX SUBUNIT 4"/>
    <property type="match status" value="1"/>
</dbReference>
<dbReference type="Pfam" id="PF08508">
    <property type="entry name" value="DUF1746"/>
    <property type="match status" value="1"/>
</dbReference>